<name>METQ_HAEIN</name>
<feature type="signal peptide" evidence="2">
    <location>
        <begin position="1"/>
        <end position="20"/>
    </location>
</feature>
<feature type="chain" id="PRO_0000019745" description="Probable D-methionine-binding lipoprotein MetQ">
    <location>
        <begin position="21"/>
        <end position="273"/>
    </location>
</feature>
<feature type="lipid moiety-binding region" description="N-palmitoyl cysteine" evidence="2">
    <location>
        <position position="21"/>
    </location>
</feature>
<feature type="lipid moiety-binding region" description="S-diacylglycerol cysteine" evidence="2">
    <location>
        <position position="21"/>
    </location>
</feature>
<feature type="sequence conflict" description="In Ref. 1; AAA24939." evidence="2" ref="1">
    <original>I</original>
    <variation>V</variation>
    <location>
        <position position="249"/>
    </location>
</feature>
<dbReference type="EMBL" id="M59804">
    <property type="protein sequence ID" value="AAA24939.1"/>
    <property type="molecule type" value="Genomic_DNA"/>
</dbReference>
<dbReference type="EMBL" id="L42023">
    <property type="protein sequence ID" value="AAC22279.1"/>
    <property type="molecule type" value="Genomic_DNA"/>
</dbReference>
<dbReference type="PIR" id="B64082">
    <property type="entry name" value="B64082"/>
</dbReference>
<dbReference type="RefSeq" id="NP_438778.1">
    <property type="nucleotide sequence ID" value="NC_000907.1"/>
</dbReference>
<dbReference type="SMR" id="P31728"/>
<dbReference type="STRING" id="71421.HI_0620"/>
<dbReference type="EnsemblBacteria" id="AAC22279">
    <property type="protein sequence ID" value="AAC22279"/>
    <property type="gene ID" value="HI_0620"/>
</dbReference>
<dbReference type="KEGG" id="hin:HI_0620"/>
<dbReference type="PATRIC" id="fig|71421.8.peg.644"/>
<dbReference type="eggNOG" id="COG1464">
    <property type="taxonomic scope" value="Bacteria"/>
</dbReference>
<dbReference type="HOGENOM" id="CLU_067080_3_0_6"/>
<dbReference type="OrthoDB" id="9812878at2"/>
<dbReference type="PhylomeDB" id="P31728"/>
<dbReference type="BioCyc" id="HINF71421:G1GJ1-641-MONOMER"/>
<dbReference type="Proteomes" id="UP000000579">
    <property type="component" value="Chromosome"/>
</dbReference>
<dbReference type="GO" id="GO:0009279">
    <property type="term" value="C:cell outer membrane"/>
    <property type="evidence" value="ECO:0007669"/>
    <property type="project" value="UniProtKB-SubCell"/>
</dbReference>
<dbReference type="GO" id="GO:0005886">
    <property type="term" value="C:plasma membrane"/>
    <property type="evidence" value="ECO:0000318"/>
    <property type="project" value="GO_Central"/>
</dbReference>
<dbReference type="GO" id="GO:0048473">
    <property type="term" value="P:D-methionine transmembrane transport"/>
    <property type="evidence" value="ECO:0000318"/>
    <property type="project" value="GO_Central"/>
</dbReference>
<dbReference type="GO" id="GO:1903692">
    <property type="term" value="P:methionine import across plasma membrane"/>
    <property type="evidence" value="ECO:0000318"/>
    <property type="project" value="GO_Central"/>
</dbReference>
<dbReference type="CDD" id="cd13598">
    <property type="entry name" value="PBP2_lipoprotein_IlpA_like"/>
    <property type="match status" value="1"/>
</dbReference>
<dbReference type="Gene3D" id="3.40.190.10">
    <property type="entry name" value="Periplasmic binding protein-like II"/>
    <property type="match status" value="2"/>
</dbReference>
<dbReference type="InterPro" id="IPR004872">
    <property type="entry name" value="Lipoprotein_NlpA"/>
</dbReference>
<dbReference type="NCBIfam" id="TIGR00363">
    <property type="entry name" value="MetQ/NlpA family lipoprotein"/>
    <property type="match status" value="1"/>
</dbReference>
<dbReference type="NCBIfam" id="NF008285">
    <property type="entry name" value="PRK11063.1"/>
    <property type="match status" value="1"/>
</dbReference>
<dbReference type="PANTHER" id="PTHR30429">
    <property type="entry name" value="D-METHIONINE-BINDING LIPOPROTEIN METQ"/>
    <property type="match status" value="1"/>
</dbReference>
<dbReference type="PANTHER" id="PTHR30429:SF1">
    <property type="entry name" value="D-METHIONINE-BINDING LIPOPROTEIN METQ-RELATED"/>
    <property type="match status" value="1"/>
</dbReference>
<dbReference type="Pfam" id="PF03180">
    <property type="entry name" value="Lipoprotein_9"/>
    <property type="match status" value="1"/>
</dbReference>
<dbReference type="PIRSF" id="PIRSF002854">
    <property type="entry name" value="MetQ"/>
    <property type="match status" value="1"/>
</dbReference>
<dbReference type="SUPFAM" id="SSF53850">
    <property type="entry name" value="Periplasmic binding protein-like II"/>
    <property type="match status" value="1"/>
</dbReference>
<dbReference type="PROSITE" id="PS51257">
    <property type="entry name" value="PROKAR_LIPOPROTEIN"/>
    <property type="match status" value="1"/>
</dbReference>
<keyword id="KW-0029">Amino-acid transport</keyword>
<keyword id="KW-0998">Cell outer membrane</keyword>
<keyword id="KW-0449">Lipoprotein</keyword>
<keyword id="KW-0472">Membrane</keyword>
<keyword id="KW-0564">Palmitate</keyword>
<keyword id="KW-1185">Reference proteome</keyword>
<keyword id="KW-0732">Signal</keyword>
<keyword id="KW-0813">Transport</keyword>
<comment type="function">
    <text evidence="1">This protein is a component of a D-methionine permease, a binding protein-dependent, ATP-driven transport system.</text>
</comment>
<comment type="subcellular location">
    <subcellularLocation>
        <location evidence="2">Cell outer membrane</location>
        <topology evidence="2">Lipid-anchor</topology>
    </subcellularLocation>
</comment>
<comment type="similarity">
    <text evidence="2">Belongs to the NlpA lipoprotein family.</text>
</comment>
<sequence>MKLKQLFAITAIASALVLTGCKEDKKPEAAAAPLKIKVGVMSGPEHQVAEIAAKVAKEKYGLDVQFVEFNDYALPNEAVSKGDLDANAMQHKPYLDEDAKAKNLNNLVIVGNTFVYPLAGYSKKIKNVNELQDGAKVVVPNDPTNRGRALILLEKQGLIKLKDANNLLSTVLDIVENPKKLNITEVDTSVAARALDDVDLAVVNNTYAGQVGLNAQDDGVFVEDKDSPYVNIIVSRTDNKDSKAVQDFIKSYQTEEVYQEAQKHFKDGVVKGW</sequence>
<evidence type="ECO:0000250" key="1"/>
<evidence type="ECO:0000305" key="2"/>
<organism>
    <name type="scientific">Haemophilus influenzae (strain ATCC 51907 / DSM 11121 / KW20 / Rd)</name>
    <dbReference type="NCBI Taxonomy" id="71421"/>
    <lineage>
        <taxon>Bacteria</taxon>
        <taxon>Pseudomonadati</taxon>
        <taxon>Pseudomonadota</taxon>
        <taxon>Gammaproteobacteria</taxon>
        <taxon>Pasteurellales</taxon>
        <taxon>Pasteurellaceae</taxon>
        <taxon>Haemophilus</taxon>
    </lineage>
</organism>
<reference key="1">
    <citation type="journal article" date="1991" name="Infect. Immun.">
        <title>Contribution of a 28-kilodalton membrane protein to the virulence of Haemophilus influenzae.</title>
        <authorList>
            <person name="Chanyangam M."/>
            <person name="Smith A.L."/>
            <person name="Moseley S.L."/>
            <person name="Kuehn M."/>
            <person name="Jenny P."/>
        </authorList>
    </citation>
    <scope>NUCLEOTIDE SEQUENCE [GENOMIC DNA]</scope>
    <source>
        <strain>Serotype B</strain>
    </source>
</reference>
<reference key="2">
    <citation type="journal article" date="1995" name="Science">
        <title>Whole-genome random sequencing and assembly of Haemophilus influenzae Rd.</title>
        <authorList>
            <person name="Fleischmann R.D."/>
            <person name="Adams M.D."/>
            <person name="White O."/>
            <person name="Clayton R.A."/>
            <person name="Kirkness E.F."/>
            <person name="Kerlavage A.R."/>
            <person name="Bult C.J."/>
            <person name="Tomb J.-F."/>
            <person name="Dougherty B.A."/>
            <person name="Merrick J.M."/>
            <person name="McKenney K."/>
            <person name="Sutton G.G."/>
            <person name="FitzHugh W."/>
            <person name="Fields C.A."/>
            <person name="Gocayne J.D."/>
            <person name="Scott J.D."/>
            <person name="Shirley R."/>
            <person name="Liu L.-I."/>
            <person name="Glodek A."/>
            <person name="Kelley J.M."/>
            <person name="Weidman J.F."/>
            <person name="Phillips C.A."/>
            <person name="Spriggs T."/>
            <person name="Hedblom E."/>
            <person name="Cotton M.D."/>
            <person name="Utterback T.R."/>
            <person name="Hanna M.C."/>
            <person name="Nguyen D.T."/>
            <person name="Saudek D.M."/>
            <person name="Brandon R.C."/>
            <person name="Fine L.D."/>
            <person name="Fritchman J.L."/>
            <person name="Fuhrmann J.L."/>
            <person name="Geoghagen N.S.M."/>
            <person name="Gnehm C.L."/>
            <person name="McDonald L.A."/>
            <person name="Small K.V."/>
            <person name="Fraser C.M."/>
            <person name="Smith H.O."/>
            <person name="Venter J.C."/>
        </authorList>
    </citation>
    <scope>NUCLEOTIDE SEQUENCE [LARGE SCALE GENOMIC DNA]</scope>
    <source>
        <strain>ATCC 51907 / DSM 11121 / KW20 / Rd</strain>
    </source>
</reference>
<reference key="3">
    <citation type="journal article" date="2000" name="Electrophoresis">
        <title>Two-dimensional map of the proteome of Haemophilus influenzae.</title>
        <authorList>
            <person name="Langen H."/>
            <person name="Takacs B."/>
            <person name="Evers S."/>
            <person name="Berndt P."/>
            <person name="Lahm H.W."/>
            <person name="Wipf B."/>
            <person name="Gray C."/>
            <person name="Fountoulakis M."/>
        </authorList>
    </citation>
    <scope>IDENTIFICATION BY MASS SPECTROMETRY</scope>
    <source>
        <strain>ATCC 51907 / DSM 11121 / KW20 / Rd</strain>
    </source>
</reference>
<proteinExistence type="evidence at protein level"/>
<gene>
    <name type="primary">metQ</name>
    <name type="synonym">hlpA</name>
    <name type="ordered locus">HI_0620</name>
</gene>
<protein>
    <recommendedName>
        <fullName>Probable D-methionine-binding lipoprotein MetQ</fullName>
    </recommendedName>
    <alternativeName>
        <fullName>28 kDa outer membrane protein</fullName>
    </alternativeName>
</protein>
<accession>P31728</accession>